<organism>
    <name type="scientific">Drosophila melanogaster</name>
    <name type="common">Fruit fly</name>
    <dbReference type="NCBI Taxonomy" id="7227"/>
    <lineage>
        <taxon>Eukaryota</taxon>
        <taxon>Metazoa</taxon>
        <taxon>Ecdysozoa</taxon>
        <taxon>Arthropoda</taxon>
        <taxon>Hexapoda</taxon>
        <taxon>Insecta</taxon>
        <taxon>Pterygota</taxon>
        <taxon>Neoptera</taxon>
        <taxon>Endopterygota</taxon>
        <taxon>Diptera</taxon>
        <taxon>Brachycera</taxon>
        <taxon>Muscomorpha</taxon>
        <taxon>Ephydroidea</taxon>
        <taxon>Drosophilidae</taxon>
        <taxon>Drosophila</taxon>
        <taxon>Sophophora</taxon>
    </lineage>
</organism>
<name>DEC13_DROME</name>
<dbReference type="EMBL" id="M35889">
    <property type="protein sequence ID" value="AAA28448.1"/>
    <property type="molecule type" value="mRNA"/>
</dbReference>
<dbReference type="EMBL" id="AE014298">
    <property type="protein sequence ID" value="AAF46278.2"/>
    <property type="molecule type" value="Genomic_DNA"/>
</dbReference>
<dbReference type="PIR" id="C44766">
    <property type="entry name" value="C44766"/>
</dbReference>
<dbReference type="RefSeq" id="NP_511072.2">
    <molecule id="P18171-1"/>
    <property type="nucleotide sequence ID" value="NM_078517.3"/>
</dbReference>
<dbReference type="SMR" id="P18171"/>
<dbReference type="BioGRID" id="58165">
    <property type="interactions" value="5"/>
</dbReference>
<dbReference type="DIP" id="DIP-19055N"/>
<dbReference type="FunCoup" id="P18171">
    <property type="interactions" value="23"/>
</dbReference>
<dbReference type="IntAct" id="P18171">
    <property type="interactions" value="11"/>
</dbReference>
<dbReference type="STRING" id="7227.FBpp0071097"/>
<dbReference type="GlyGen" id="P18171">
    <property type="glycosylation" value="1 site, 1 O-linked glycan (1 site)"/>
</dbReference>
<dbReference type="PaxDb" id="7227-FBpp0071097"/>
<dbReference type="DNASU" id="31691"/>
<dbReference type="EnsemblMetazoa" id="FBtr0071145">
    <molecule id="P18171-1"/>
    <property type="protein sequence ID" value="FBpp0071097"/>
    <property type="gene ID" value="FBgn0000427"/>
</dbReference>
<dbReference type="GeneID" id="31691"/>
<dbReference type="KEGG" id="dme:Dmel_CG2175"/>
<dbReference type="AGR" id="FB:FBgn0000427"/>
<dbReference type="CTD" id="31691"/>
<dbReference type="FlyBase" id="FBgn0000427">
    <property type="gene designation" value="dec"/>
</dbReference>
<dbReference type="VEuPathDB" id="VectorBase:FBgn0000427"/>
<dbReference type="eggNOG" id="ENOG502QPW2">
    <property type="taxonomic scope" value="Eukaryota"/>
</dbReference>
<dbReference type="InParanoid" id="P18171"/>
<dbReference type="OMA" id="RREYKMG"/>
<dbReference type="OrthoDB" id="8070541at2759"/>
<dbReference type="PhylomeDB" id="P18171"/>
<dbReference type="SignaLink" id="P18171"/>
<dbReference type="BioGRID-ORCS" id="31691">
    <property type="hits" value="0 hits in 1 CRISPR screen"/>
</dbReference>
<dbReference type="GenomeRNAi" id="31691"/>
<dbReference type="Proteomes" id="UP000000803">
    <property type="component" value="Chromosome X"/>
</dbReference>
<dbReference type="Bgee" id="FBgn0000427">
    <property type="expression patterns" value="Expressed in polar follicle cell (Drosophila) in ovary and 39 other cell types or tissues"/>
</dbReference>
<dbReference type="ExpressionAtlas" id="P18171">
    <property type="expression patterns" value="baseline and differential"/>
</dbReference>
<dbReference type="GO" id="GO:0042600">
    <property type="term" value="C:egg chorion"/>
    <property type="evidence" value="ECO:0000314"/>
    <property type="project" value="UniProtKB"/>
</dbReference>
<dbReference type="GO" id="GO:0005576">
    <property type="term" value="C:extracellular region"/>
    <property type="evidence" value="ECO:0007669"/>
    <property type="project" value="UniProtKB-SubCell"/>
</dbReference>
<dbReference type="GO" id="GO:0005634">
    <property type="term" value="C:nucleus"/>
    <property type="evidence" value="ECO:0000318"/>
    <property type="project" value="GO_Central"/>
</dbReference>
<dbReference type="GO" id="GO:0000987">
    <property type="term" value="F:cis-regulatory region sequence-specific DNA binding"/>
    <property type="evidence" value="ECO:0000318"/>
    <property type="project" value="GO_Central"/>
</dbReference>
<dbReference type="GO" id="GO:0000981">
    <property type="term" value="F:DNA-binding transcription factor activity, RNA polymerase II-specific"/>
    <property type="evidence" value="ECO:0000318"/>
    <property type="project" value="GO_Central"/>
</dbReference>
<dbReference type="GO" id="GO:0005213">
    <property type="term" value="F:structural constituent of egg chorion"/>
    <property type="evidence" value="ECO:0000315"/>
    <property type="project" value="UniProtKB"/>
</dbReference>
<dbReference type="GO" id="GO:0007304">
    <property type="term" value="P:chorion-containing eggshell formation"/>
    <property type="evidence" value="ECO:0000315"/>
    <property type="project" value="FlyBase"/>
</dbReference>
<dbReference type="GO" id="GO:0007306">
    <property type="term" value="P:egg chorion assembly"/>
    <property type="evidence" value="ECO:0000315"/>
    <property type="project" value="UniProtKB"/>
</dbReference>
<dbReference type="GO" id="GO:0042594">
    <property type="term" value="P:response to starvation"/>
    <property type="evidence" value="ECO:0000318"/>
    <property type="project" value="GO_Central"/>
</dbReference>
<dbReference type="InterPro" id="IPR006720">
    <property type="entry name" value="DEC-1_C"/>
</dbReference>
<dbReference type="InterPro" id="IPR006719">
    <property type="entry name" value="DEC-1_N"/>
</dbReference>
<dbReference type="InterPro" id="IPR006718">
    <property type="entry name" value="DEC-1_REPEAT"/>
</dbReference>
<dbReference type="Pfam" id="PF04624">
    <property type="entry name" value="Dec-1"/>
    <property type="match status" value="8"/>
</dbReference>
<dbReference type="Pfam" id="PF04626">
    <property type="entry name" value="DEC-1_C"/>
    <property type="match status" value="1"/>
</dbReference>
<dbReference type="Pfam" id="PF04625">
    <property type="entry name" value="DEC-1_N"/>
    <property type="match status" value="1"/>
</dbReference>
<feature type="signal peptide" evidence="1">
    <location>
        <begin position="1"/>
        <end position="19"/>
    </location>
</feature>
<feature type="chain" id="PRO_0000021101" description="Defective chorion protein, FC177 isoform">
    <location>
        <begin position="20"/>
        <end position="1590"/>
    </location>
</feature>
<feature type="repeat" description="1">
    <location>
        <begin position="493"/>
        <end position="518"/>
    </location>
</feature>
<feature type="repeat" description="2">
    <location>
        <begin position="519"/>
        <end position="544"/>
    </location>
</feature>
<feature type="repeat" description="3">
    <location>
        <begin position="545"/>
        <end position="570"/>
    </location>
</feature>
<feature type="repeat" description="4">
    <location>
        <begin position="571"/>
        <end position="596"/>
    </location>
</feature>
<feature type="repeat" description="5">
    <location>
        <begin position="597"/>
        <end position="622"/>
    </location>
</feature>
<feature type="repeat" description="6; approximate">
    <location>
        <begin position="623"/>
        <end position="652"/>
    </location>
</feature>
<feature type="repeat" description="7; approximate">
    <location>
        <begin position="653"/>
        <end position="680"/>
    </location>
</feature>
<feature type="repeat" description="8; approximate">
    <location>
        <begin position="681"/>
        <end position="696"/>
    </location>
</feature>
<feature type="repeat" description="9; approximate">
    <location>
        <begin position="697"/>
        <end position="720"/>
    </location>
</feature>
<feature type="repeat" description="10; approximate">
    <location>
        <begin position="721"/>
        <end position="733"/>
    </location>
</feature>
<feature type="repeat" description="11; approximate">
    <location>
        <begin position="734"/>
        <end position="758"/>
    </location>
</feature>
<feature type="repeat" description="12; approximate">
    <location>
        <begin position="759"/>
        <end position="788"/>
    </location>
</feature>
<feature type="region of interest" description="Disordered" evidence="2">
    <location>
        <begin position="23"/>
        <end position="60"/>
    </location>
</feature>
<feature type="region of interest" description="Disordered" evidence="2">
    <location>
        <begin position="184"/>
        <end position="212"/>
    </location>
</feature>
<feature type="region of interest" description="Disordered" evidence="2">
    <location>
        <begin position="268"/>
        <end position="294"/>
    </location>
</feature>
<feature type="region of interest" description="12 X 26 AA approximate tandem repeats, Glu, Met-rich">
    <location>
        <begin position="493"/>
        <end position="788"/>
    </location>
</feature>
<feature type="region of interest" description="Disordered" evidence="2">
    <location>
        <begin position="843"/>
        <end position="875"/>
    </location>
</feature>
<feature type="region of interest" description="Disordered" evidence="2">
    <location>
        <begin position="944"/>
        <end position="983"/>
    </location>
</feature>
<feature type="region of interest" description="Disordered" evidence="2">
    <location>
        <begin position="1119"/>
        <end position="1221"/>
    </location>
</feature>
<feature type="region of interest" description="Disordered" evidence="2">
    <location>
        <begin position="1261"/>
        <end position="1352"/>
    </location>
</feature>
<feature type="region of interest" description="Disordered" evidence="2">
    <location>
        <begin position="1375"/>
        <end position="1515"/>
    </location>
</feature>
<feature type="region of interest" description="Disordered" evidence="2">
    <location>
        <begin position="1538"/>
        <end position="1590"/>
    </location>
</feature>
<feature type="compositionally biased region" description="Polar residues" evidence="2">
    <location>
        <begin position="32"/>
        <end position="41"/>
    </location>
</feature>
<feature type="compositionally biased region" description="Low complexity" evidence="2">
    <location>
        <begin position="268"/>
        <end position="280"/>
    </location>
</feature>
<feature type="compositionally biased region" description="Polar residues" evidence="2">
    <location>
        <begin position="957"/>
        <end position="977"/>
    </location>
</feature>
<feature type="compositionally biased region" description="Acidic residues" evidence="2">
    <location>
        <begin position="1119"/>
        <end position="1130"/>
    </location>
</feature>
<feature type="compositionally biased region" description="Basic and acidic residues" evidence="2">
    <location>
        <begin position="1131"/>
        <end position="1148"/>
    </location>
</feature>
<feature type="compositionally biased region" description="Low complexity" evidence="2">
    <location>
        <begin position="1151"/>
        <end position="1195"/>
    </location>
</feature>
<feature type="compositionally biased region" description="Polar residues" evidence="2">
    <location>
        <begin position="1205"/>
        <end position="1221"/>
    </location>
</feature>
<feature type="compositionally biased region" description="Basic and acidic residues" evidence="2">
    <location>
        <begin position="1272"/>
        <end position="1288"/>
    </location>
</feature>
<feature type="compositionally biased region" description="Acidic residues" evidence="2">
    <location>
        <begin position="1295"/>
        <end position="1306"/>
    </location>
</feature>
<feature type="compositionally biased region" description="Low complexity" evidence="2">
    <location>
        <begin position="1307"/>
        <end position="1319"/>
    </location>
</feature>
<feature type="compositionally biased region" description="Low complexity" evidence="2">
    <location>
        <begin position="1435"/>
        <end position="1452"/>
    </location>
</feature>
<feature type="compositionally biased region" description="Basic residues" evidence="2">
    <location>
        <begin position="1493"/>
        <end position="1504"/>
    </location>
</feature>
<feature type="compositionally biased region" description="Low complexity" evidence="2">
    <location>
        <begin position="1505"/>
        <end position="1515"/>
    </location>
</feature>
<feature type="compositionally biased region" description="Basic residues" evidence="2">
    <location>
        <begin position="1554"/>
        <end position="1576"/>
    </location>
</feature>
<feature type="compositionally biased region" description="Polar residues" evidence="2">
    <location>
        <begin position="1577"/>
        <end position="1590"/>
    </location>
</feature>
<feature type="sequence conflict" description="In Ref. 1; AAA28448." evidence="5" ref="1">
    <original>A</original>
    <variation>V</variation>
    <location>
        <position position="17"/>
    </location>
</feature>
<feature type="sequence conflict" description="In Ref. 1; AAA28448." evidence="5" ref="1">
    <original>Q</original>
    <variation>E</variation>
    <location>
        <position position="219"/>
    </location>
</feature>
<feature type="sequence conflict" description="In Ref. 1; AAA28448." evidence="5" ref="1">
    <original>D</original>
    <variation>H</variation>
    <location>
        <position position="347"/>
    </location>
</feature>
<feature type="sequence conflict" description="In Ref. 1; AAA28448." evidence="5" ref="1">
    <original>A</original>
    <variation>T</variation>
    <location>
        <position position="382"/>
    </location>
</feature>
<feature type="sequence conflict" description="In Ref. 1; AAA28448." evidence="5" ref="1">
    <original>PENEGTARHKVDALGVGGNKRKKSKSKSAPP</original>
    <variation>AGERRHRQAQSRCPGSWRQQAQEVQVQVGAA</variation>
    <location>
        <begin position="847"/>
        <end position="877"/>
    </location>
</feature>
<feature type="sequence conflict" description="In Ref. 1." evidence="5" ref="1">
    <original>QRPVVQSYGTSYGG</original>
    <variation>SVRWFRVTEQATAE</variation>
    <location>
        <begin position="888"/>
        <end position="901"/>
    </location>
</feature>
<feature type="sequence conflict" description="In Ref. 1; AAA28448." evidence="5" ref="1">
    <original>R</original>
    <variation>Q</variation>
    <location>
        <position position="995"/>
    </location>
</feature>
<feature type="sequence conflict" description="In Ref. 1; AAA28448." evidence="5" ref="1">
    <original>SV</original>
    <variation>C</variation>
    <location>
        <begin position="1051"/>
        <end position="1052"/>
    </location>
</feature>
<feature type="sequence conflict" description="In Ref. 1; AAA28448." evidence="5" ref="1">
    <original>Q</original>
    <variation>P</variation>
    <location>
        <position position="1296"/>
    </location>
</feature>
<feature type="sequence conflict" description="In Ref. 1; AAA28448." evidence="5" ref="1">
    <original>E</original>
    <variation>D</variation>
    <location>
        <position position="1299"/>
    </location>
</feature>
<proteinExistence type="evidence at transcript level"/>
<sequence length="1590" mass="179188">MRLFSLLPLLALLVVQAAGQSEVTSDDPATDAGSTTNSTTDTKPRIPSQDEILGQMPSINPIRTGNPQMDAFYMMFPALGSLLKWGSLFPAYSILGAIPDNLQPTAAASKVVLVLADDATAKTRVARQNPPPNPLGQLMNWPALPQDFQLPSMDLGPQVGSFLAQLPAMPTVPGLLGAAAPVPAPAPAPAAAPPPAPAPAADPPAAPVPDAPQPAILGQAALQNAFTFFNPANFDASSLLGQSVPTFAPPNLDFVAQMQRQFFPGMTPAQPAAAGTDAQASDISEVRVRPEDPYSQEAQMKIKSALEMEQERQQQAQVKDQEQVPLLWFRMPTTQNQDATEEKTLEDLRVEAKLRAFERQVIAELRMLQKIELMAKQMRSSAAAQNGDSPYRISYPLSRTPIHKITRADIEQALRDDYVRRLVNKEAQRRARNSGINTQKANALKRQAKSQDQTLSKEDIVQIMAYAYRMANEQMESEKGKQDKVYAAYRTEQNPMMMQQRQWSEEQAKIQQNQQQIQQNPMMMQQRQWSEEQAKIQQNQQQIQQNPMMMQQRQWSEEQAKIQQNQQQIQQNPMMMQQRQWSEEQAKIQQNQQQIQQNPMMVQQRQWSEEQAKIQQNQQQIQQNPMMMQQRQWSEEQAKIQHDQQMAQQMAQQGLMMTEQRQRQWSEDQAKIQQAQQMAQQTPMMMPQMQQRQWTEDPQMVQQMQQRQWAEDQTRMQMAQQNPMMQQQRQMAENPQMMQQRQWSEEQTKIEQAQQMAQQNQMMMQQMQQRQWSEDQAQIQQQQRQMMQQTPMMMKERQWAEENPQSVQQQGPMMMQQQMPSMMQREVEDEDNKAEDDLVGEAGPQMPENEGTARHKVDALGVGGNKRKKSKSKSAPPTVINYYYAAPQRPVVQSYGTSYGGGGYGSNAYGVPRPVNSYQSQGYRAAVGNDEVDEMLRQHQTMARTINPKQPGEVGGSESQKSNSNPPTTLTPAPQEQPQEHRVHKRLAHFHRFGREAGLNATTSKGCGCGRLDCLCGRSCRCGRRGLESRVVSSRTSGTCQCKASHRNKRSVEYGTLETIDEGSLNELRREYKLGLKEITLSPDEDPAEALMRYNAASIREALERASMEPLEIGGDQYEEDAQQEPMEEEQLQHDPNTEPQYNHKDFVRLTTSTASPITSTTEAATPTGSDSTSEATVTPEVTTTTSTSTTTTTESTKDEGLDMQQDSQAEAESSHVTKSISKQEAEIHQLHSIVEELKNEILKLNLRCSTIISNNVAKEPVTEKNPPVVEEPSKQEDKPKVEEKVIAEEQAPVEQEEELEEDEDSTSISTTTETPSPSGSYSTKPGLSLGSPRVDEQSGSSNKLDYDDDNNWQRILANRGYDTDYLTKSHERQFAQGQNLEMPKNCNYDGNGSQEYGPYPEFQADEPSTDTEGKAKRALSVKQQAQLLNAALNDSGSDSSDGTTTTTTPSPYAMRGKFVRRRSTARRVPIPKIGKASDEVWVRSPRQAKMPQRPKKSMSKPKKQSSQVTTQATVSSTKLDSLVDVLKDLVRLQIQKEKKSSLLRTQSNNLSKTKPKSIKPVKVIKRKRLRRRQHKSIATTIRSPIQTKA</sequence>
<reference key="1">
    <citation type="journal article" date="1990" name="Dev. Biol.">
        <title>Multiple proteins are produced from the dec-1 eggshell gene in Drosophila by alternative RNA splicing and proteolytic cleavage events.</title>
        <authorList>
            <person name="Waring G.L."/>
            <person name="Hawley R.J."/>
            <person name="Schoenfeld T."/>
        </authorList>
    </citation>
    <scope>NUCLEOTIDE SEQUENCE [MRNA]</scope>
    <scope>ALTERNATIVE SPLICING</scope>
</reference>
<reference key="2">
    <citation type="journal article" date="2000" name="Science">
        <title>The genome sequence of Drosophila melanogaster.</title>
        <authorList>
            <person name="Adams M.D."/>
            <person name="Celniker S.E."/>
            <person name="Holt R.A."/>
            <person name="Evans C.A."/>
            <person name="Gocayne J.D."/>
            <person name="Amanatides P.G."/>
            <person name="Scherer S.E."/>
            <person name="Li P.W."/>
            <person name="Hoskins R.A."/>
            <person name="Galle R.F."/>
            <person name="George R.A."/>
            <person name="Lewis S.E."/>
            <person name="Richards S."/>
            <person name="Ashburner M."/>
            <person name="Henderson S.N."/>
            <person name="Sutton G.G."/>
            <person name="Wortman J.R."/>
            <person name="Yandell M.D."/>
            <person name="Zhang Q."/>
            <person name="Chen L.X."/>
            <person name="Brandon R.C."/>
            <person name="Rogers Y.-H.C."/>
            <person name="Blazej R.G."/>
            <person name="Champe M."/>
            <person name="Pfeiffer B.D."/>
            <person name="Wan K.H."/>
            <person name="Doyle C."/>
            <person name="Baxter E.G."/>
            <person name="Helt G."/>
            <person name="Nelson C.R."/>
            <person name="Miklos G.L.G."/>
            <person name="Abril J.F."/>
            <person name="Agbayani A."/>
            <person name="An H.-J."/>
            <person name="Andrews-Pfannkoch C."/>
            <person name="Baldwin D."/>
            <person name="Ballew R.M."/>
            <person name="Basu A."/>
            <person name="Baxendale J."/>
            <person name="Bayraktaroglu L."/>
            <person name="Beasley E.M."/>
            <person name="Beeson K.Y."/>
            <person name="Benos P.V."/>
            <person name="Berman B.P."/>
            <person name="Bhandari D."/>
            <person name="Bolshakov S."/>
            <person name="Borkova D."/>
            <person name="Botchan M.R."/>
            <person name="Bouck J."/>
            <person name="Brokstein P."/>
            <person name="Brottier P."/>
            <person name="Burtis K.C."/>
            <person name="Busam D.A."/>
            <person name="Butler H."/>
            <person name="Cadieu E."/>
            <person name="Center A."/>
            <person name="Chandra I."/>
            <person name="Cherry J.M."/>
            <person name="Cawley S."/>
            <person name="Dahlke C."/>
            <person name="Davenport L.B."/>
            <person name="Davies P."/>
            <person name="de Pablos B."/>
            <person name="Delcher A."/>
            <person name="Deng Z."/>
            <person name="Mays A.D."/>
            <person name="Dew I."/>
            <person name="Dietz S.M."/>
            <person name="Dodson K."/>
            <person name="Doup L.E."/>
            <person name="Downes M."/>
            <person name="Dugan-Rocha S."/>
            <person name="Dunkov B.C."/>
            <person name="Dunn P."/>
            <person name="Durbin K.J."/>
            <person name="Evangelista C.C."/>
            <person name="Ferraz C."/>
            <person name="Ferriera S."/>
            <person name="Fleischmann W."/>
            <person name="Fosler C."/>
            <person name="Gabrielian A.E."/>
            <person name="Garg N.S."/>
            <person name="Gelbart W.M."/>
            <person name="Glasser K."/>
            <person name="Glodek A."/>
            <person name="Gong F."/>
            <person name="Gorrell J.H."/>
            <person name="Gu Z."/>
            <person name="Guan P."/>
            <person name="Harris M."/>
            <person name="Harris N.L."/>
            <person name="Harvey D.A."/>
            <person name="Heiman T.J."/>
            <person name="Hernandez J.R."/>
            <person name="Houck J."/>
            <person name="Hostin D."/>
            <person name="Houston K.A."/>
            <person name="Howland T.J."/>
            <person name="Wei M.-H."/>
            <person name="Ibegwam C."/>
            <person name="Jalali M."/>
            <person name="Kalush F."/>
            <person name="Karpen G.H."/>
            <person name="Ke Z."/>
            <person name="Kennison J.A."/>
            <person name="Ketchum K.A."/>
            <person name="Kimmel B.E."/>
            <person name="Kodira C.D."/>
            <person name="Kraft C.L."/>
            <person name="Kravitz S."/>
            <person name="Kulp D."/>
            <person name="Lai Z."/>
            <person name="Lasko P."/>
            <person name="Lei Y."/>
            <person name="Levitsky A.A."/>
            <person name="Li J.H."/>
            <person name="Li Z."/>
            <person name="Liang Y."/>
            <person name="Lin X."/>
            <person name="Liu X."/>
            <person name="Mattei B."/>
            <person name="McIntosh T.C."/>
            <person name="McLeod M.P."/>
            <person name="McPherson D."/>
            <person name="Merkulov G."/>
            <person name="Milshina N.V."/>
            <person name="Mobarry C."/>
            <person name="Morris J."/>
            <person name="Moshrefi A."/>
            <person name="Mount S.M."/>
            <person name="Moy M."/>
            <person name="Murphy B."/>
            <person name="Murphy L."/>
            <person name="Muzny D.M."/>
            <person name="Nelson D.L."/>
            <person name="Nelson D.R."/>
            <person name="Nelson K.A."/>
            <person name="Nixon K."/>
            <person name="Nusskern D.R."/>
            <person name="Pacleb J.M."/>
            <person name="Palazzolo M."/>
            <person name="Pittman G.S."/>
            <person name="Pan S."/>
            <person name="Pollard J."/>
            <person name="Puri V."/>
            <person name="Reese M.G."/>
            <person name="Reinert K."/>
            <person name="Remington K."/>
            <person name="Saunders R.D.C."/>
            <person name="Scheeler F."/>
            <person name="Shen H."/>
            <person name="Shue B.C."/>
            <person name="Siden-Kiamos I."/>
            <person name="Simpson M."/>
            <person name="Skupski M.P."/>
            <person name="Smith T.J."/>
            <person name="Spier E."/>
            <person name="Spradling A.C."/>
            <person name="Stapleton M."/>
            <person name="Strong R."/>
            <person name="Sun E."/>
            <person name="Svirskas R."/>
            <person name="Tector C."/>
            <person name="Turner R."/>
            <person name="Venter E."/>
            <person name="Wang A.H."/>
            <person name="Wang X."/>
            <person name="Wang Z.-Y."/>
            <person name="Wassarman D.A."/>
            <person name="Weinstock G.M."/>
            <person name="Weissenbach J."/>
            <person name="Williams S.M."/>
            <person name="Woodage T."/>
            <person name="Worley K.C."/>
            <person name="Wu D."/>
            <person name="Yang S."/>
            <person name="Yao Q.A."/>
            <person name="Ye J."/>
            <person name="Yeh R.-F."/>
            <person name="Zaveri J.S."/>
            <person name="Zhan M."/>
            <person name="Zhang G."/>
            <person name="Zhao Q."/>
            <person name="Zheng L."/>
            <person name="Zheng X.H."/>
            <person name="Zhong F.N."/>
            <person name="Zhong W."/>
            <person name="Zhou X."/>
            <person name="Zhu S.C."/>
            <person name="Zhu X."/>
            <person name="Smith H.O."/>
            <person name="Gibbs R.A."/>
            <person name="Myers E.W."/>
            <person name="Rubin G.M."/>
            <person name="Venter J.C."/>
        </authorList>
    </citation>
    <scope>NUCLEOTIDE SEQUENCE [LARGE SCALE GENOMIC DNA]</scope>
    <source>
        <strain>Berkeley</strain>
    </source>
</reference>
<reference key="3">
    <citation type="journal article" date="2002" name="Genome Biol.">
        <title>Annotation of the Drosophila melanogaster euchromatic genome: a systematic review.</title>
        <authorList>
            <person name="Misra S."/>
            <person name="Crosby M.A."/>
            <person name="Mungall C.J."/>
            <person name="Matthews B.B."/>
            <person name="Campbell K.S."/>
            <person name="Hradecky P."/>
            <person name="Huang Y."/>
            <person name="Kaminker J.S."/>
            <person name="Millburn G.H."/>
            <person name="Prochnik S.E."/>
            <person name="Smith C.D."/>
            <person name="Tupy J.L."/>
            <person name="Whitfield E.J."/>
            <person name="Bayraktaroglu L."/>
            <person name="Berman B.P."/>
            <person name="Bettencourt B.R."/>
            <person name="Celniker S.E."/>
            <person name="de Grey A.D.N.J."/>
            <person name="Drysdale R.A."/>
            <person name="Harris N.L."/>
            <person name="Richter J."/>
            <person name="Russo S."/>
            <person name="Schroeder A.J."/>
            <person name="Shu S.Q."/>
            <person name="Stapleton M."/>
            <person name="Yamada C."/>
            <person name="Ashburner M."/>
            <person name="Gelbart W.M."/>
            <person name="Rubin G.M."/>
            <person name="Lewis S.E."/>
        </authorList>
    </citation>
    <scope>GENOME REANNOTATION</scope>
    <scope>ALTERNATIVE SPLICING</scope>
    <source>
        <strain>Berkeley</strain>
    </source>
</reference>
<reference key="4">
    <citation type="journal article" date="1988" name="Genes Dev.">
        <title>Cloning and analysis of the dec-1 female-sterile locus, a gene required for proper assembly of the Drosophila eggshell.</title>
        <authorList>
            <person name="Hawley R.J."/>
            <person name="Waring G.L."/>
        </authorList>
    </citation>
    <scope>FUNCTION</scope>
    <scope>SUBCELLULAR LOCATION</scope>
    <scope>DEVELOPMENTAL STAGE</scope>
</reference>
<accession>P18171</accession>
<accession>Q9W3P3</accession>
<evidence type="ECO:0000255" key="1"/>
<evidence type="ECO:0000256" key="2">
    <source>
        <dbReference type="SAM" id="MobiDB-lite"/>
    </source>
</evidence>
<evidence type="ECO:0000269" key="3">
    <source>
    </source>
</evidence>
<evidence type="ECO:0000303" key="4">
    <source>
    </source>
</evidence>
<evidence type="ECO:0000305" key="5"/>
<evidence type="ECO:0000312" key="6">
    <source>
        <dbReference type="FlyBase" id="FBgn0000427"/>
    </source>
</evidence>
<gene>
    <name evidence="6" type="primary">dec</name>
    <name evidence="4" type="synonym">dec-1</name>
    <name evidence="6" type="ORF">CG2175</name>
</gene>
<keyword id="KW-0025">Alternative splicing</keyword>
<keyword id="KW-1185">Reference proteome</keyword>
<keyword id="KW-0677">Repeat</keyword>
<keyword id="KW-0964">Secreted</keyword>
<keyword id="KW-0732">Signal</keyword>
<comment type="function">
    <text evidence="3">Required for proper assembly of the eggshell.</text>
</comment>
<comment type="subcellular location">
    <subcellularLocation>
        <location evidence="3">Secreted</location>
    </subcellularLocation>
</comment>
<comment type="alternative products">
    <event type="alternative splicing"/>
    <isoform>
        <id>P18171-1</id>
        <name>FC177</name>
        <sequence type="displayed"/>
    </isoform>
    <isoform>
        <id>P18170-1</id>
        <name>FC106</name>
        <sequence type="external"/>
    </isoform>
    <isoform>
        <id>P18169-1</id>
        <name>FC125</name>
        <sequence type="external"/>
    </isoform>
</comment>
<comment type="developmental stage">
    <text evidence="3">Expressed during embryonic stage 11.</text>
</comment>
<protein>
    <recommendedName>
        <fullName evidence="5">Defective chorion protein, FC177 isoform</fullName>
    </recommendedName>
</protein>